<name>RL13_KOCRD</name>
<evidence type="ECO:0000255" key="1">
    <source>
        <dbReference type="HAMAP-Rule" id="MF_01366"/>
    </source>
</evidence>
<evidence type="ECO:0000305" key="2"/>
<gene>
    <name evidence="1" type="primary">rplM</name>
    <name type="ordered locus">KRH_06460</name>
</gene>
<proteinExistence type="inferred from homology"/>
<accession>B2GJ23</accession>
<organism>
    <name type="scientific">Kocuria rhizophila (strain ATCC 9341 / DSM 348 / NBRC 103217 / DC2201)</name>
    <dbReference type="NCBI Taxonomy" id="378753"/>
    <lineage>
        <taxon>Bacteria</taxon>
        <taxon>Bacillati</taxon>
        <taxon>Actinomycetota</taxon>
        <taxon>Actinomycetes</taxon>
        <taxon>Micrococcales</taxon>
        <taxon>Micrococcaceae</taxon>
        <taxon>Kocuria</taxon>
    </lineage>
</organism>
<keyword id="KW-1185">Reference proteome</keyword>
<keyword id="KW-0687">Ribonucleoprotein</keyword>
<keyword id="KW-0689">Ribosomal protein</keyword>
<protein>
    <recommendedName>
        <fullName evidence="1">Large ribosomal subunit protein uL13</fullName>
    </recommendedName>
    <alternativeName>
        <fullName evidence="2">50S ribosomal protein L13</fullName>
    </alternativeName>
</protein>
<reference key="1">
    <citation type="journal article" date="2008" name="J. Bacteriol.">
        <title>Complete genome sequence of the soil actinomycete Kocuria rhizophila.</title>
        <authorList>
            <person name="Takarada H."/>
            <person name="Sekine M."/>
            <person name="Kosugi H."/>
            <person name="Matsuo Y."/>
            <person name="Fujisawa T."/>
            <person name="Omata S."/>
            <person name="Kishi E."/>
            <person name="Shimizu A."/>
            <person name="Tsukatani N."/>
            <person name="Tanikawa S."/>
            <person name="Fujita N."/>
            <person name="Harayama S."/>
        </authorList>
    </citation>
    <scope>NUCLEOTIDE SEQUENCE [LARGE SCALE GENOMIC DNA]</scope>
    <source>
        <strain>ATCC 9341 / DSM 348 / NBRC 103217 / DC2201</strain>
    </source>
</reference>
<feature type="chain" id="PRO_1000144142" description="Large ribosomal subunit protein uL13">
    <location>
        <begin position="1"/>
        <end position="147"/>
    </location>
</feature>
<sequence length="147" mass="16298">MRTYTPKPGDVQRQWHVIDATDVVLGRLASQTATLLRGKHKPTFAPHVDTGDFVIIINAEKVALTGSKLQKKRAYRHSGYPGGLKSTSYAELLEKNPTRAVEKAIKGMLPKNKLAAQQLSKLKVYAGAEHPHQAQQPKPYEFTQVAQ</sequence>
<dbReference type="EMBL" id="AP009152">
    <property type="protein sequence ID" value="BAG28993.1"/>
    <property type="molecule type" value="Genomic_DNA"/>
</dbReference>
<dbReference type="RefSeq" id="WP_012397718.1">
    <property type="nucleotide sequence ID" value="NC_010617.1"/>
</dbReference>
<dbReference type="SMR" id="B2GJ23"/>
<dbReference type="STRING" id="378753.KRH_06460"/>
<dbReference type="KEGG" id="krh:KRH_06460"/>
<dbReference type="eggNOG" id="COG0102">
    <property type="taxonomic scope" value="Bacteria"/>
</dbReference>
<dbReference type="HOGENOM" id="CLU_082184_2_2_11"/>
<dbReference type="OrthoDB" id="9801330at2"/>
<dbReference type="Proteomes" id="UP000008838">
    <property type="component" value="Chromosome"/>
</dbReference>
<dbReference type="GO" id="GO:0022625">
    <property type="term" value="C:cytosolic large ribosomal subunit"/>
    <property type="evidence" value="ECO:0007669"/>
    <property type="project" value="TreeGrafter"/>
</dbReference>
<dbReference type="GO" id="GO:0003729">
    <property type="term" value="F:mRNA binding"/>
    <property type="evidence" value="ECO:0007669"/>
    <property type="project" value="TreeGrafter"/>
</dbReference>
<dbReference type="GO" id="GO:0003735">
    <property type="term" value="F:structural constituent of ribosome"/>
    <property type="evidence" value="ECO:0007669"/>
    <property type="project" value="InterPro"/>
</dbReference>
<dbReference type="GO" id="GO:0017148">
    <property type="term" value="P:negative regulation of translation"/>
    <property type="evidence" value="ECO:0007669"/>
    <property type="project" value="TreeGrafter"/>
</dbReference>
<dbReference type="GO" id="GO:0006412">
    <property type="term" value="P:translation"/>
    <property type="evidence" value="ECO:0007669"/>
    <property type="project" value="UniProtKB-UniRule"/>
</dbReference>
<dbReference type="CDD" id="cd00392">
    <property type="entry name" value="Ribosomal_L13"/>
    <property type="match status" value="1"/>
</dbReference>
<dbReference type="FunFam" id="3.90.1180.10:FF:000001">
    <property type="entry name" value="50S ribosomal protein L13"/>
    <property type="match status" value="1"/>
</dbReference>
<dbReference type="Gene3D" id="3.90.1180.10">
    <property type="entry name" value="Ribosomal protein L13"/>
    <property type="match status" value="1"/>
</dbReference>
<dbReference type="HAMAP" id="MF_01366">
    <property type="entry name" value="Ribosomal_uL13"/>
    <property type="match status" value="1"/>
</dbReference>
<dbReference type="InterPro" id="IPR005822">
    <property type="entry name" value="Ribosomal_uL13"/>
</dbReference>
<dbReference type="InterPro" id="IPR005823">
    <property type="entry name" value="Ribosomal_uL13_bac-type"/>
</dbReference>
<dbReference type="InterPro" id="IPR036899">
    <property type="entry name" value="Ribosomal_uL13_sf"/>
</dbReference>
<dbReference type="NCBIfam" id="TIGR01066">
    <property type="entry name" value="rplM_bact"/>
    <property type="match status" value="1"/>
</dbReference>
<dbReference type="PANTHER" id="PTHR11545:SF2">
    <property type="entry name" value="LARGE RIBOSOMAL SUBUNIT PROTEIN UL13M"/>
    <property type="match status" value="1"/>
</dbReference>
<dbReference type="PANTHER" id="PTHR11545">
    <property type="entry name" value="RIBOSOMAL PROTEIN L13"/>
    <property type="match status" value="1"/>
</dbReference>
<dbReference type="Pfam" id="PF00572">
    <property type="entry name" value="Ribosomal_L13"/>
    <property type="match status" value="1"/>
</dbReference>
<dbReference type="PIRSF" id="PIRSF002181">
    <property type="entry name" value="Ribosomal_L13"/>
    <property type="match status" value="1"/>
</dbReference>
<dbReference type="SUPFAM" id="SSF52161">
    <property type="entry name" value="Ribosomal protein L13"/>
    <property type="match status" value="1"/>
</dbReference>
<comment type="function">
    <text evidence="1">This protein is one of the early assembly proteins of the 50S ribosomal subunit, although it is not seen to bind rRNA by itself. It is important during the early stages of 50S assembly.</text>
</comment>
<comment type="subunit">
    <text evidence="1">Part of the 50S ribosomal subunit.</text>
</comment>
<comment type="similarity">
    <text evidence="1">Belongs to the universal ribosomal protein uL13 family.</text>
</comment>